<accession>O94312</accession>
<proteinExistence type="evidence at protein level"/>
<protein>
    <recommendedName>
        <fullName>PWWP domain-containing protein2</fullName>
    </recommendedName>
</protein>
<reference key="1">
    <citation type="journal article" date="2002" name="Nature">
        <title>The genome sequence of Schizosaccharomyces pombe.</title>
        <authorList>
            <person name="Wood V."/>
            <person name="Gwilliam R."/>
            <person name="Rajandream M.A."/>
            <person name="Lyne M.H."/>
            <person name="Lyne R."/>
            <person name="Stewart A."/>
            <person name="Sgouros J.G."/>
            <person name="Peat N."/>
            <person name="Hayles J."/>
            <person name="Baker S.G."/>
            <person name="Basham D."/>
            <person name="Bowman S."/>
            <person name="Brooks K."/>
            <person name="Brown D."/>
            <person name="Brown S."/>
            <person name="Chillingworth T."/>
            <person name="Churcher C.M."/>
            <person name="Collins M."/>
            <person name="Connor R."/>
            <person name="Cronin A."/>
            <person name="Davis P."/>
            <person name="Feltwell T."/>
            <person name="Fraser A."/>
            <person name="Gentles S."/>
            <person name="Goble A."/>
            <person name="Hamlin N."/>
            <person name="Harris D.E."/>
            <person name="Hidalgo J."/>
            <person name="Hodgson G."/>
            <person name="Holroyd S."/>
            <person name="Hornsby T."/>
            <person name="Howarth S."/>
            <person name="Huckle E.J."/>
            <person name="Hunt S."/>
            <person name="Jagels K."/>
            <person name="James K.D."/>
            <person name="Jones L."/>
            <person name="Jones M."/>
            <person name="Leather S."/>
            <person name="McDonald S."/>
            <person name="McLean J."/>
            <person name="Mooney P."/>
            <person name="Moule S."/>
            <person name="Mungall K.L."/>
            <person name="Murphy L.D."/>
            <person name="Niblett D."/>
            <person name="Odell C."/>
            <person name="Oliver K."/>
            <person name="O'Neil S."/>
            <person name="Pearson D."/>
            <person name="Quail M.A."/>
            <person name="Rabbinowitsch E."/>
            <person name="Rutherford K.M."/>
            <person name="Rutter S."/>
            <person name="Saunders D."/>
            <person name="Seeger K."/>
            <person name="Sharp S."/>
            <person name="Skelton J."/>
            <person name="Simmonds M.N."/>
            <person name="Squares R."/>
            <person name="Squares S."/>
            <person name="Stevens K."/>
            <person name="Taylor K."/>
            <person name="Taylor R.G."/>
            <person name="Tivey A."/>
            <person name="Walsh S.V."/>
            <person name="Warren T."/>
            <person name="Whitehead S."/>
            <person name="Woodward J.R."/>
            <person name="Volckaert G."/>
            <person name="Aert R."/>
            <person name="Robben J."/>
            <person name="Grymonprez B."/>
            <person name="Weltjens I."/>
            <person name="Vanstreels E."/>
            <person name="Rieger M."/>
            <person name="Schaefer M."/>
            <person name="Mueller-Auer S."/>
            <person name="Gabel C."/>
            <person name="Fuchs M."/>
            <person name="Duesterhoeft A."/>
            <person name="Fritzc C."/>
            <person name="Holzer E."/>
            <person name="Moestl D."/>
            <person name="Hilbert H."/>
            <person name="Borzym K."/>
            <person name="Langer I."/>
            <person name="Beck A."/>
            <person name="Lehrach H."/>
            <person name="Reinhardt R."/>
            <person name="Pohl T.M."/>
            <person name="Eger P."/>
            <person name="Zimmermann W."/>
            <person name="Wedler H."/>
            <person name="Wambutt R."/>
            <person name="Purnelle B."/>
            <person name="Goffeau A."/>
            <person name="Cadieu E."/>
            <person name="Dreano S."/>
            <person name="Gloux S."/>
            <person name="Lelaure V."/>
            <person name="Mottier S."/>
            <person name="Galibert F."/>
            <person name="Aves S.J."/>
            <person name="Xiang Z."/>
            <person name="Hunt C."/>
            <person name="Moore K."/>
            <person name="Hurst S.M."/>
            <person name="Lucas M."/>
            <person name="Rochet M."/>
            <person name="Gaillardin C."/>
            <person name="Tallada V.A."/>
            <person name="Garzon A."/>
            <person name="Thode G."/>
            <person name="Daga R.R."/>
            <person name="Cruzado L."/>
            <person name="Jimenez J."/>
            <person name="Sanchez M."/>
            <person name="del Rey F."/>
            <person name="Benito J."/>
            <person name="Dominguez A."/>
            <person name="Revuelta J.L."/>
            <person name="Moreno S."/>
            <person name="Armstrong J."/>
            <person name="Forsburg S.L."/>
            <person name="Cerutti L."/>
            <person name="Lowe T."/>
            <person name="McCombie W.R."/>
            <person name="Paulsen I."/>
            <person name="Potashkin J."/>
            <person name="Shpakovski G.V."/>
            <person name="Ussery D."/>
            <person name="Barrell B.G."/>
            <person name="Nurse P."/>
        </authorList>
    </citation>
    <scope>NUCLEOTIDE SEQUENCE [LARGE SCALE GENOMIC DNA]</scope>
    <source>
        <strain>972 / ATCC 24843</strain>
    </source>
</reference>
<reference key="2">
    <citation type="journal article" date="2003" name="J. Mol. Biol.">
        <title>Structural variation in PWWP domains.</title>
        <authorList>
            <person name="Slater L.M."/>
            <person name="Allen M.D."/>
            <person name="Bycroft M."/>
        </authorList>
    </citation>
    <scope>STRUCTURE BY NMR OF 118-225</scope>
</reference>
<feature type="chain" id="PRO_0000116768" description="PWWP domain-containing protein2">
    <location>
        <begin position="1"/>
        <end position="568"/>
    </location>
</feature>
<feature type="domain" description="PWWP" evidence="1">
    <location>
        <begin position="125"/>
        <end position="189"/>
    </location>
</feature>
<feature type="region of interest" description="Disordered" evidence="2">
    <location>
        <begin position="1"/>
        <end position="126"/>
    </location>
</feature>
<feature type="region of interest" description="Disordered" evidence="2">
    <location>
        <begin position="213"/>
        <end position="340"/>
    </location>
</feature>
<feature type="region of interest" description="Disordered" evidence="2">
    <location>
        <begin position="465"/>
        <end position="568"/>
    </location>
</feature>
<feature type="compositionally biased region" description="Basic and acidic residues" evidence="2">
    <location>
        <begin position="1"/>
        <end position="19"/>
    </location>
</feature>
<feature type="compositionally biased region" description="Polar residues" evidence="2">
    <location>
        <begin position="29"/>
        <end position="46"/>
    </location>
</feature>
<feature type="compositionally biased region" description="Basic and acidic residues" evidence="2">
    <location>
        <begin position="48"/>
        <end position="88"/>
    </location>
</feature>
<feature type="compositionally biased region" description="Basic and acidic residues" evidence="2">
    <location>
        <begin position="100"/>
        <end position="122"/>
    </location>
</feature>
<feature type="compositionally biased region" description="Low complexity" evidence="2">
    <location>
        <begin position="214"/>
        <end position="228"/>
    </location>
</feature>
<feature type="compositionally biased region" description="Acidic residues" evidence="2">
    <location>
        <begin position="229"/>
        <end position="249"/>
    </location>
</feature>
<feature type="compositionally biased region" description="Basic residues" evidence="2">
    <location>
        <begin position="255"/>
        <end position="266"/>
    </location>
</feature>
<feature type="compositionally biased region" description="Polar residues" evidence="2">
    <location>
        <begin position="281"/>
        <end position="292"/>
    </location>
</feature>
<feature type="compositionally biased region" description="Acidic residues" evidence="2">
    <location>
        <begin position="325"/>
        <end position="336"/>
    </location>
</feature>
<feature type="compositionally biased region" description="Basic and acidic residues" evidence="2">
    <location>
        <begin position="489"/>
        <end position="500"/>
    </location>
</feature>
<feature type="compositionally biased region" description="Basic and acidic residues" evidence="2">
    <location>
        <begin position="514"/>
        <end position="541"/>
    </location>
</feature>
<feature type="strand" evidence="3">
    <location>
        <begin position="128"/>
        <end position="133"/>
    </location>
</feature>
<feature type="strand" evidence="3">
    <location>
        <begin position="136"/>
        <end position="143"/>
    </location>
</feature>
<feature type="helix" evidence="3">
    <location>
        <begin position="146"/>
        <end position="148"/>
    </location>
</feature>
<feature type="helix" evidence="3">
    <location>
        <begin position="151"/>
        <end position="155"/>
    </location>
</feature>
<feature type="strand" evidence="3">
    <location>
        <begin position="160"/>
        <end position="162"/>
    </location>
</feature>
<feature type="strand" evidence="3">
    <location>
        <begin position="165"/>
        <end position="169"/>
    </location>
</feature>
<feature type="turn" evidence="3">
    <location>
        <begin position="170"/>
        <end position="173"/>
    </location>
</feature>
<feature type="strand" evidence="3">
    <location>
        <begin position="176"/>
        <end position="178"/>
    </location>
</feature>
<feature type="helix" evidence="3">
    <location>
        <begin position="180"/>
        <end position="182"/>
    </location>
</feature>
<feature type="strand" evidence="3">
    <location>
        <begin position="183"/>
        <end position="185"/>
    </location>
</feature>
<feature type="helix" evidence="3">
    <location>
        <begin position="188"/>
        <end position="196"/>
    </location>
</feature>
<feature type="helix" evidence="3">
    <location>
        <begin position="203"/>
        <end position="214"/>
    </location>
</feature>
<feature type="helix" evidence="3">
    <location>
        <begin position="218"/>
        <end position="220"/>
    </location>
</feature>
<evidence type="ECO:0000255" key="1">
    <source>
        <dbReference type="PROSITE-ProRule" id="PRU00162"/>
    </source>
</evidence>
<evidence type="ECO:0000256" key="2">
    <source>
        <dbReference type="SAM" id="MobiDB-lite"/>
    </source>
</evidence>
<evidence type="ECO:0007829" key="3">
    <source>
        <dbReference type="PDB" id="1H3Z"/>
    </source>
</evidence>
<keyword id="KW-0002">3D-structure</keyword>
<keyword id="KW-1185">Reference proteome</keyword>
<organism>
    <name type="scientific">Schizosaccharomyces pombe (strain 972 / ATCC 24843)</name>
    <name type="common">Fission yeast</name>
    <dbReference type="NCBI Taxonomy" id="284812"/>
    <lineage>
        <taxon>Eukaryota</taxon>
        <taxon>Fungi</taxon>
        <taxon>Dikarya</taxon>
        <taxon>Ascomycota</taxon>
        <taxon>Taphrinomycotina</taxon>
        <taxon>Schizosaccharomycetes</taxon>
        <taxon>Schizosaccharomycetales</taxon>
        <taxon>Schizosaccharomycetaceae</taxon>
        <taxon>Schizosaccharomyces</taxon>
    </lineage>
</organism>
<name>PDP2_SCHPO</name>
<dbReference type="EMBL" id="CU329671">
    <property type="protein sequence ID" value="CAA22121.1"/>
    <property type="molecule type" value="Genomic_DNA"/>
</dbReference>
<dbReference type="PIR" id="T39897">
    <property type="entry name" value="T39897"/>
</dbReference>
<dbReference type="RefSeq" id="NP_596684.1">
    <property type="nucleotide sequence ID" value="NM_001022607.2"/>
</dbReference>
<dbReference type="PDB" id="1H3Z">
    <property type="method" value="NMR"/>
    <property type="chains" value="A=118-225"/>
</dbReference>
<dbReference type="PDBsum" id="1H3Z"/>
<dbReference type="BMRB" id="O94312"/>
<dbReference type="SMR" id="O94312"/>
<dbReference type="BioGRID" id="277178">
    <property type="interactions" value="21"/>
</dbReference>
<dbReference type="FunCoup" id="O94312">
    <property type="interactions" value="270"/>
</dbReference>
<dbReference type="STRING" id="284812.O94312"/>
<dbReference type="iPTMnet" id="O94312"/>
<dbReference type="PaxDb" id="4896-SPBC215.07c.1"/>
<dbReference type="EnsemblFungi" id="SPBC215.07c.1">
    <property type="protein sequence ID" value="SPBC215.07c.1:pep"/>
    <property type="gene ID" value="SPBC215.07c"/>
</dbReference>
<dbReference type="GeneID" id="2540653"/>
<dbReference type="KEGG" id="spo:2540653"/>
<dbReference type="PomBase" id="SPBC215.07c">
    <property type="gene designation" value="pdp2"/>
</dbReference>
<dbReference type="VEuPathDB" id="FungiDB:SPBC215.07c"/>
<dbReference type="eggNOG" id="ENOG502S5RN">
    <property type="taxonomic scope" value="Eukaryota"/>
</dbReference>
<dbReference type="HOGENOM" id="CLU_032844_0_0_1"/>
<dbReference type="InParanoid" id="O94312"/>
<dbReference type="OMA" id="WPVIVCD"/>
<dbReference type="PhylomeDB" id="O94312"/>
<dbReference type="EvolutionaryTrace" id="O94312"/>
<dbReference type="PRO" id="PR:O94312"/>
<dbReference type="Proteomes" id="UP000002485">
    <property type="component" value="Chromosome II"/>
</dbReference>
<dbReference type="GO" id="GO:0033100">
    <property type="term" value="C:NuA3 histone acetyltransferase complex"/>
    <property type="evidence" value="ECO:0000266"/>
    <property type="project" value="PomBase"/>
</dbReference>
<dbReference type="GO" id="GO:0005634">
    <property type="term" value="C:nucleus"/>
    <property type="evidence" value="ECO:0007005"/>
    <property type="project" value="PomBase"/>
</dbReference>
<dbReference type="GO" id="GO:0035064">
    <property type="term" value="F:methylated histone binding"/>
    <property type="evidence" value="ECO:0000250"/>
    <property type="project" value="PomBase"/>
</dbReference>
<dbReference type="GO" id="GO:0006338">
    <property type="term" value="P:chromatin remodeling"/>
    <property type="evidence" value="ECO:0000318"/>
    <property type="project" value="GO_Central"/>
</dbReference>
<dbReference type="CDD" id="cd05840">
    <property type="entry name" value="PWWP_ScIOC4-like"/>
    <property type="match status" value="1"/>
</dbReference>
<dbReference type="FunFam" id="2.30.30.140:FF:000120">
    <property type="entry name" value="PWWP domain-containing protein2"/>
    <property type="match status" value="1"/>
</dbReference>
<dbReference type="Gene3D" id="2.30.30.140">
    <property type="match status" value="1"/>
</dbReference>
<dbReference type="IDEAL" id="IID50183"/>
<dbReference type="InterPro" id="IPR035503">
    <property type="entry name" value="IOC4-like_PWWP"/>
</dbReference>
<dbReference type="InterPro" id="IPR000313">
    <property type="entry name" value="PWWP_dom"/>
</dbReference>
<dbReference type="Pfam" id="PF00855">
    <property type="entry name" value="PWWP"/>
    <property type="match status" value="1"/>
</dbReference>
<dbReference type="SMART" id="SM00293">
    <property type="entry name" value="PWWP"/>
    <property type="match status" value="1"/>
</dbReference>
<dbReference type="SUPFAM" id="SSF63748">
    <property type="entry name" value="Tudor/PWWP/MBT"/>
    <property type="match status" value="1"/>
</dbReference>
<dbReference type="PROSITE" id="PS50812">
    <property type="entry name" value="PWWP"/>
    <property type="match status" value="1"/>
</dbReference>
<sequence>MTEIKDSSVKDENPGKQEESSIAVESREMSTATNNSKNIETTSSNGAEDIKIQRDVGDDKDLDDKEANDKSSKGLEEESDSKDRKTIETDQPSNNIGDIKSQKSEKSNGNARKETKQSERVNYKPGMRVLTKMSGFPWWPSMVVTESKMTSVARKSKPKRAGTFYPVIFFPNKEYLWTGSDSLTPLTSEAISQFLEKPKPKTASLIKAYKMAQSTPDLDSLSVPSSESEVSEEESDQEMSEPSPIEEDYNDTKARRITRKGTKKKTVTFDPSLESVPQKRLNASSNVSSNPAKKTRVSPRRSTAASKKKSPSSKRASSDEIEKDKEEEEGSVANEEDVAKRTFHSREQSLLFLRHKLQSSLLSPKQDLSQVDYKLVHNYLDKLANFQGIDVPLIQKTKIAVVVRKIFSLAGLPKENEDEVKSICGDILENRWKSLLQEISSQKQLSTDASQTQDASIANENETEIASLDEGSESKPTPSPPAEQLTDQKQNEDNEDKVKADSNGPTQNENETADASKDMISEEKSSKDADNSLEVAGKDFAEDGTEQTPNLAEPEDGVAAVDLSTGQK</sequence>
<gene>
    <name type="primary">pdp2</name>
    <name type="ORF">SPBC215.07c</name>
</gene>